<gene>
    <name type="primary">lldD</name>
    <name type="synonym">lldD2</name>
    <name type="ordered locus">Rv1872c</name>
</gene>
<comment type="catalytic activity">
    <reaction>
        <text>(S)-lactate + A = pyruvate + AH2</text>
        <dbReference type="Rhea" id="RHEA:45816"/>
        <dbReference type="ChEBI" id="CHEBI:13193"/>
        <dbReference type="ChEBI" id="CHEBI:15361"/>
        <dbReference type="ChEBI" id="CHEBI:16651"/>
        <dbReference type="ChEBI" id="CHEBI:17499"/>
    </reaction>
</comment>
<comment type="cofactor">
    <cofactor evidence="1">
        <name>FMN</name>
        <dbReference type="ChEBI" id="CHEBI:58210"/>
    </cofactor>
</comment>
<comment type="miscellaneous">
    <text>Was identified as a high-confidence drug target.</text>
</comment>
<comment type="similarity">
    <text evidence="1">Belongs to the FMN-dependent alpha-hydroxy acid dehydrogenase family.</text>
</comment>
<name>LLDD_MYCTU</name>
<protein>
    <recommendedName>
        <fullName>Putative L-lactate dehydrogenase</fullName>
        <ecNumber>1.1.-.-</ecNumber>
    </recommendedName>
</protein>
<sequence>MAVNRRVPRVRDLAPLLQFNRPQFDTSKRRLGAALTIQDLRRIAKRRTPRAAFDYADGGAEDELSIARARQGFRDIEFHPTILRDVTTVCAGWNVLGQPTVLPFGIAPTGFTRLMHTEGEIAGARAAAAAGIPFSLSTLATCAIEDLVIAVPQGRKWFQLYMWRDRDRSMALVRRVAAAGFDTMLVTVDVPVAGARLRDVRNGMSIPPALTLRTVLDAMGHPRWWFDLLTTEPLAFASLDRWPGTVGEYLNTVFDPSLTFDDLAWIKSQWPGKLVVKGIQTLDDARAVVDRGVDGIVLSNHGGRQLDRAPVPFHLLPHVARELGKHTEILVDTGIMSGADIVAAIALGARCTLIGRAYLYGLMAGGEAGVNRAIEILQTGVIRTMRLLGVTCLEELSPRHVTQLRRLGPIGAPT</sequence>
<organism>
    <name type="scientific">Mycobacterium tuberculosis (strain ATCC 25618 / H37Rv)</name>
    <dbReference type="NCBI Taxonomy" id="83332"/>
    <lineage>
        <taxon>Bacteria</taxon>
        <taxon>Bacillati</taxon>
        <taxon>Actinomycetota</taxon>
        <taxon>Actinomycetes</taxon>
        <taxon>Mycobacteriales</taxon>
        <taxon>Mycobacteriaceae</taxon>
        <taxon>Mycobacterium</taxon>
        <taxon>Mycobacterium tuberculosis complex</taxon>
    </lineage>
</organism>
<accession>P9WND5</accession>
<accession>L0T848</accession>
<accession>P95143</accession>
<accession>Q7D7V5</accession>
<reference key="1">
    <citation type="journal article" date="1998" name="Nature">
        <title>Deciphering the biology of Mycobacterium tuberculosis from the complete genome sequence.</title>
        <authorList>
            <person name="Cole S.T."/>
            <person name="Brosch R."/>
            <person name="Parkhill J."/>
            <person name="Garnier T."/>
            <person name="Churcher C.M."/>
            <person name="Harris D.E."/>
            <person name="Gordon S.V."/>
            <person name="Eiglmeier K."/>
            <person name="Gas S."/>
            <person name="Barry C.E. III"/>
            <person name="Tekaia F."/>
            <person name="Badcock K."/>
            <person name="Basham D."/>
            <person name="Brown D."/>
            <person name="Chillingworth T."/>
            <person name="Connor R."/>
            <person name="Davies R.M."/>
            <person name="Devlin K."/>
            <person name="Feltwell T."/>
            <person name="Gentles S."/>
            <person name="Hamlin N."/>
            <person name="Holroyd S."/>
            <person name="Hornsby T."/>
            <person name="Jagels K."/>
            <person name="Krogh A."/>
            <person name="McLean J."/>
            <person name="Moule S."/>
            <person name="Murphy L.D."/>
            <person name="Oliver S."/>
            <person name="Osborne J."/>
            <person name="Quail M.A."/>
            <person name="Rajandream M.A."/>
            <person name="Rogers J."/>
            <person name="Rutter S."/>
            <person name="Seeger K."/>
            <person name="Skelton S."/>
            <person name="Squares S."/>
            <person name="Squares R."/>
            <person name="Sulston J.E."/>
            <person name="Taylor K."/>
            <person name="Whitehead S."/>
            <person name="Barrell B.G."/>
        </authorList>
    </citation>
    <scope>NUCLEOTIDE SEQUENCE [LARGE SCALE GENOMIC DNA]</scope>
    <source>
        <strain>ATCC 25618 / H37Rv</strain>
    </source>
</reference>
<reference key="2">
    <citation type="journal article" date="2008" name="BMC Syst. Biol.">
        <title>targetTB: a target identification pipeline for Mycobacterium tuberculosis through an interactome, reactome and genome-scale structural analysis.</title>
        <authorList>
            <person name="Raman K."/>
            <person name="Yeturu K."/>
            <person name="Chandra N."/>
        </authorList>
    </citation>
    <scope>IDENTIFICATION AS A DRUG TARGET [LARGE SCALE ANALYSIS]</scope>
</reference>
<reference key="3">
    <citation type="journal article" date="2011" name="Mol. Cell. Proteomics">
        <title>Proteogenomic analysis of Mycobacterium tuberculosis by high resolution mass spectrometry.</title>
        <authorList>
            <person name="Kelkar D.S."/>
            <person name="Kumar D."/>
            <person name="Kumar P."/>
            <person name="Balakrishnan L."/>
            <person name="Muthusamy B."/>
            <person name="Yadav A.K."/>
            <person name="Shrivastava P."/>
            <person name="Marimuthu A."/>
            <person name="Anand S."/>
            <person name="Sundaram H."/>
            <person name="Kingsbury R."/>
            <person name="Harsha H.C."/>
            <person name="Nair B."/>
            <person name="Prasad T.S."/>
            <person name="Chauhan D.S."/>
            <person name="Katoch K."/>
            <person name="Katoch V.M."/>
            <person name="Kumar P."/>
            <person name="Chaerkady R."/>
            <person name="Ramachandran S."/>
            <person name="Dash D."/>
            <person name="Pandey A."/>
        </authorList>
    </citation>
    <scope>IDENTIFICATION BY MASS SPECTROMETRY [LARGE SCALE ANALYSIS]</scope>
    <source>
        <strain>ATCC 25618 / H37Rv</strain>
    </source>
</reference>
<keyword id="KW-0285">Flavoprotein</keyword>
<keyword id="KW-0288">FMN</keyword>
<keyword id="KW-0560">Oxidoreductase</keyword>
<keyword id="KW-1185">Reference proteome</keyword>
<evidence type="ECO:0000255" key="1">
    <source>
        <dbReference type="PROSITE-ProRule" id="PRU00683"/>
    </source>
</evidence>
<dbReference type="EC" id="1.1.-.-"/>
<dbReference type="EMBL" id="AL123456">
    <property type="protein sequence ID" value="CCP44638.1"/>
    <property type="molecule type" value="Genomic_DNA"/>
</dbReference>
<dbReference type="PIR" id="H70667">
    <property type="entry name" value="H70667"/>
</dbReference>
<dbReference type="RefSeq" id="NP_216388.1">
    <property type="nucleotide sequence ID" value="NC_000962.3"/>
</dbReference>
<dbReference type="RefSeq" id="WP_003899057.1">
    <property type="nucleotide sequence ID" value="NZ_NVQJ01000013.1"/>
</dbReference>
<dbReference type="SMR" id="P9WND5"/>
<dbReference type="FunCoup" id="P9WND5">
    <property type="interactions" value="325"/>
</dbReference>
<dbReference type="STRING" id="83332.Rv1872c"/>
<dbReference type="PaxDb" id="83332-Rv1872c"/>
<dbReference type="DNASU" id="885754"/>
<dbReference type="GeneID" id="885754"/>
<dbReference type="KEGG" id="mtu:Rv1872c"/>
<dbReference type="KEGG" id="mtv:RVBD_1872c"/>
<dbReference type="TubercuList" id="Rv1872c"/>
<dbReference type="eggNOG" id="COG1304">
    <property type="taxonomic scope" value="Bacteria"/>
</dbReference>
<dbReference type="InParanoid" id="P9WND5"/>
<dbReference type="OrthoDB" id="9770452at2"/>
<dbReference type="PhylomeDB" id="P9WND5"/>
<dbReference type="Proteomes" id="UP000001584">
    <property type="component" value="Chromosome"/>
</dbReference>
<dbReference type="GO" id="GO:0009274">
    <property type="term" value="C:peptidoglycan-based cell wall"/>
    <property type="evidence" value="ECO:0007005"/>
    <property type="project" value="MTBBASE"/>
</dbReference>
<dbReference type="GO" id="GO:0005886">
    <property type="term" value="C:plasma membrane"/>
    <property type="evidence" value="ECO:0007005"/>
    <property type="project" value="MTBBASE"/>
</dbReference>
<dbReference type="GO" id="GO:0010181">
    <property type="term" value="F:FMN binding"/>
    <property type="evidence" value="ECO:0007669"/>
    <property type="project" value="InterPro"/>
</dbReference>
<dbReference type="GO" id="GO:0016491">
    <property type="term" value="F:oxidoreductase activity"/>
    <property type="evidence" value="ECO:0007669"/>
    <property type="project" value="UniProtKB-KW"/>
</dbReference>
<dbReference type="CDD" id="cd02809">
    <property type="entry name" value="alpha_hydroxyacid_oxid_FMN"/>
    <property type="match status" value="1"/>
</dbReference>
<dbReference type="FunFam" id="3.20.20.70:FF:000261">
    <property type="entry name" value="L-lactate dehydrogenase (Cytochrome)"/>
    <property type="match status" value="1"/>
</dbReference>
<dbReference type="Gene3D" id="3.20.20.70">
    <property type="entry name" value="Aldolase class I"/>
    <property type="match status" value="1"/>
</dbReference>
<dbReference type="InterPro" id="IPR013785">
    <property type="entry name" value="Aldolase_TIM"/>
</dbReference>
<dbReference type="InterPro" id="IPR012133">
    <property type="entry name" value="Alpha-hydoxy_acid_DH_FMN"/>
</dbReference>
<dbReference type="InterPro" id="IPR000262">
    <property type="entry name" value="FMN-dep_DH"/>
</dbReference>
<dbReference type="InterPro" id="IPR037396">
    <property type="entry name" value="FMN_HAD"/>
</dbReference>
<dbReference type="InterPro" id="IPR008259">
    <property type="entry name" value="FMN_hydac_DH_AS"/>
</dbReference>
<dbReference type="PANTHER" id="PTHR10578:SF107">
    <property type="entry name" value="2-HYDROXYACID OXIDASE 1"/>
    <property type="match status" value="1"/>
</dbReference>
<dbReference type="PANTHER" id="PTHR10578">
    <property type="entry name" value="S -2-HYDROXY-ACID OXIDASE-RELATED"/>
    <property type="match status" value="1"/>
</dbReference>
<dbReference type="Pfam" id="PF01070">
    <property type="entry name" value="FMN_dh"/>
    <property type="match status" value="1"/>
</dbReference>
<dbReference type="PIRSF" id="PIRSF000138">
    <property type="entry name" value="Al-hdrx_acd_dh"/>
    <property type="match status" value="1"/>
</dbReference>
<dbReference type="SUPFAM" id="SSF51395">
    <property type="entry name" value="FMN-linked oxidoreductases"/>
    <property type="match status" value="1"/>
</dbReference>
<dbReference type="PROSITE" id="PS00557">
    <property type="entry name" value="FMN_HYDROXY_ACID_DH_1"/>
    <property type="match status" value="1"/>
</dbReference>
<dbReference type="PROSITE" id="PS51349">
    <property type="entry name" value="FMN_HYDROXY_ACID_DH_2"/>
    <property type="match status" value="1"/>
</dbReference>
<feature type="chain" id="PRO_0000390893" description="Putative L-lactate dehydrogenase">
    <location>
        <begin position="1"/>
        <end position="414"/>
    </location>
</feature>
<feature type="domain" description="FMN hydroxy acid dehydrogenase" evidence="1">
    <location>
        <begin position="29"/>
        <end position="406"/>
    </location>
</feature>
<feature type="active site" description="Proton acceptor" evidence="1">
    <location>
        <position position="301"/>
    </location>
</feature>
<feature type="binding site" evidence="1">
    <location>
        <position position="55"/>
    </location>
    <ligand>
        <name>a 2-oxocarboxylate</name>
        <dbReference type="ChEBI" id="CHEBI:35179"/>
    </ligand>
</feature>
<feature type="binding site" evidence="1">
    <location>
        <position position="137"/>
    </location>
    <ligand>
        <name>FMN</name>
        <dbReference type="ChEBI" id="CHEBI:58210"/>
    </ligand>
</feature>
<feature type="binding site" evidence="1">
    <location>
        <position position="159"/>
    </location>
    <ligand>
        <name>FMN</name>
        <dbReference type="ChEBI" id="CHEBI:58210"/>
    </ligand>
</feature>
<feature type="binding site" evidence="1">
    <location>
        <position position="161"/>
    </location>
    <ligand>
        <name>a 2-oxocarboxylate</name>
        <dbReference type="ChEBI" id="CHEBI:35179"/>
    </ligand>
</feature>
<feature type="binding site" evidence="1">
    <location>
        <position position="187"/>
    </location>
    <ligand>
        <name>FMN</name>
        <dbReference type="ChEBI" id="CHEBI:58210"/>
    </ligand>
</feature>
<feature type="binding site" evidence="1">
    <location>
        <position position="196"/>
    </location>
    <ligand>
        <name>a 2-oxocarboxylate</name>
        <dbReference type="ChEBI" id="CHEBI:35179"/>
    </ligand>
</feature>
<feature type="binding site" evidence="1">
    <location>
        <position position="277"/>
    </location>
    <ligand>
        <name>FMN</name>
        <dbReference type="ChEBI" id="CHEBI:58210"/>
    </ligand>
</feature>
<feature type="binding site" evidence="1">
    <location>
        <position position="304"/>
    </location>
    <ligand>
        <name>a 2-oxocarboxylate</name>
        <dbReference type="ChEBI" id="CHEBI:35179"/>
    </ligand>
</feature>
<feature type="binding site" evidence="1">
    <location>
        <begin position="332"/>
        <end position="336"/>
    </location>
    <ligand>
        <name>FMN</name>
        <dbReference type="ChEBI" id="CHEBI:58210"/>
    </ligand>
</feature>
<feature type="binding site" evidence="1">
    <location>
        <begin position="355"/>
        <end position="356"/>
    </location>
    <ligand>
        <name>FMN</name>
        <dbReference type="ChEBI" id="CHEBI:58210"/>
    </ligand>
</feature>
<proteinExistence type="evidence at protein level"/>